<feature type="chain" id="PRO_0000359922" description="Uncharacterized protein YwhL">
    <location>
        <begin position="1"/>
        <end position="458"/>
    </location>
</feature>
<name>YWHL_BACSU</name>
<protein>
    <recommendedName>
        <fullName>Uncharacterized protein YwhL</fullName>
    </recommendedName>
</protein>
<gene>
    <name type="primary">ywhL</name>
    <name type="ordered locus">BSU37440</name>
</gene>
<accession>P71004</accession>
<accession>Q794Z5</accession>
<sequence length="458" mass="49581">MKKNDLSALQENCFCFCDEEISREAPFQVPIDFPEGFKVDTAEASAAVTWSTDNLSCISEPCLIQTGPEPEDIGVRYAVRVQGTITLLVSVSPVRNQYGQGDGAVSVIHTEEIDQVVYYAAQSGRCPDFSQITVEDLLIVPPFYGSPLTVAGTLVLPPSPDPQSYVFTANTGDSTVSVIDADLNTVVKTIPFSDVPTNLGVTFDKAFTYVLHGNTNLVSVIDNKTLTIINTITVGGGPRKIEFDPTDEFAYVMAAGSIYVINTASQSVIDVIPIPGALDFALDPNGQYVYTANGSSWSVDKYDVNTGQLVESIIDTFEFPSLITTPYAGNFAYVLNGELWPKGVTEISLSPLSRGGDFSRLFETLRTIVFSLDSTRAYFLEPYSEPFLINNLYVVNTARQRIIANVSLPGAFDLAVTPDKQYIYAAQPNDNAVTVYRTSDYTAVTVIPVGAGPSAIAM</sequence>
<dbReference type="EMBL" id="Z80360">
    <property type="protein sequence ID" value="CAB02502.1"/>
    <property type="molecule type" value="Genomic_DNA"/>
</dbReference>
<dbReference type="EMBL" id="AL009126">
    <property type="protein sequence ID" value="CAB15771.1"/>
    <property type="molecule type" value="Genomic_DNA"/>
</dbReference>
<dbReference type="PIR" id="C70058">
    <property type="entry name" value="C70058"/>
</dbReference>
<dbReference type="RefSeq" id="NP_391624.1">
    <property type="nucleotide sequence ID" value="NC_000964.3"/>
</dbReference>
<dbReference type="RefSeq" id="WP_003244415.1">
    <property type="nucleotide sequence ID" value="NZ_OZ025638.1"/>
</dbReference>
<dbReference type="SMR" id="P71004"/>
<dbReference type="FunCoup" id="P71004">
    <property type="interactions" value="34"/>
</dbReference>
<dbReference type="STRING" id="224308.BSU37440"/>
<dbReference type="PaxDb" id="224308-BSU37440"/>
<dbReference type="EnsemblBacteria" id="CAB15771">
    <property type="protein sequence ID" value="CAB15771"/>
    <property type="gene ID" value="BSU_37440"/>
</dbReference>
<dbReference type="GeneID" id="937067"/>
<dbReference type="KEGG" id="bsu:BSU37440"/>
<dbReference type="PATRIC" id="fig|224308.179.peg.4054"/>
<dbReference type="eggNOG" id="COG3391">
    <property type="taxonomic scope" value="Bacteria"/>
</dbReference>
<dbReference type="InParanoid" id="P71004"/>
<dbReference type="OrthoDB" id="2643961at2"/>
<dbReference type="PhylomeDB" id="P71004"/>
<dbReference type="BioCyc" id="BSUB:BSU37440-MONOMER"/>
<dbReference type="Proteomes" id="UP000001570">
    <property type="component" value="Chromosome"/>
</dbReference>
<dbReference type="Gene3D" id="2.130.10.10">
    <property type="entry name" value="YVTN repeat-like/Quinoprotein amine dehydrogenase"/>
    <property type="match status" value="3"/>
</dbReference>
<dbReference type="InterPro" id="IPR051200">
    <property type="entry name" value="Host-pathogen_enzymatic-act"/>
</dbReference>
<dbReference type="InterPro" id="IPR011045">
    <property type="entry name" value="N2O_reductase_N"/>
</dbReference>
<dbReference type="InterPro" id="IPR015943">
    <property type="entry name" value="WD40/YVTN_repeat-like_dom_sf"/>
</dbReference>
<dbReference type="PANTHER" id="PTHR47197:SF3">
    <property type="entry name" value="DIHYDRO-HEME D1 DEHYDROGENASE"/>
    <property type="match status" value="1"/>
</dbReference>
<dbReference type="PANTHER" id="PTHR47197">
    <property type="entry name" value="PROTEIN NIRF"/>
    <property type="match status" value="1"/>
</dbReference>
<dbReference type="SUPFAM" id="SSF50974">
    <property type="entry name" value="Nitrous oxide reductase, N-terminal domain"/>
    <property type="match status" value="1"/>
</dbReference>
<proteinExistence type="predicted"/>
<keyword id="KW-1185">Reference proteome</keyword>
<organism>
    <name type="scientific">Bacillus subtilis (strain 168)</name>
    <dbReference type="NCBI Taxonomy" id="224308"/>
    <lineage>
        <taxon>Bacteria</taxon>
        <taxon>Bacillati</taxon>
        <taxon>Bacillota</taxon>
        <taxon>Bacilli</taxon>
        <taxon>Bacillales</taxon>
        <taxon>Bacillaceae</taxon>
        <taxon>Bacillus</taxon>
    </lineage>
</organism>
<reference key="1">
    <citation type="journal article" date="1997" name="Microbiology">
        <title>The Bacillus subtilis genome from gerBC (311 degrees) to licR (334 degrees).</title>
        <authorList>
            <person name="Presecan E."/>
            <person name="Moszer I."/>
            <person name="Boursier L."/>
            <person name="Cruz Ramos H."/>
            <person name="De La Fuente V."/>
            <person name="Hullo M.-F."/>
            <person name="Lelong C."/>
            <person name="Schleich S."/>
            <person name="Sekowska A."/>
            <person name="Song B.H."/>
            <person name="Villani G."/>
            <person name="Kunst F."/>
            <person name="Danchin A."/>
            <person name="Glaser P."/>
        </authorList>
    </citation>
    <scope>NUCLEOTIDE SEQUENCE [GENOMIC DNA]</scope>
    <source>
        <strain>168</strain>
    </source>
</reference>
<reference key="2">
    <citation type="journal article" date="1997" name="Nature">
        <title>The complete genome sequence of the Gram-positive bacterium Bacillus subtilis.</title>
        <authorList>
            <person name="Kunst F."/>
            <person name="Ogasawara N."/>
            <person name="Moszer I."/>
            <person name="Albertini A.M."/>
            <person name="Alloni G."/>
            <person name="Azevedo V."/>
            <person name="Bertero M.G."/>
            <person name="Bessieres P."/>
            <person name="Bolotin A."/>
            <person name="Borchert S."/>
            <person name="Borriss R."/>
            <person name="Boursier L."/>
            <person name="Brans A."/>
            <person name="Braun M."/>
            <person name="Brignell S.C."/>
            <person name="Bron S."/>
            <person name="Brouillet S."/>
            <person name="Bruschi C.V."/>
            <person name="Caldwell B."/>
            <person name="Capuano V."/>
            <person name="Carter N.M."/>
            <person name="Choi S.-K."/>
            <person name="Codani J.-J."/>
            <person name="Connerton I.F."/>
            <person name="Cummings N.J."/>
            <person name="Daniel R.A."/>
            <person name="Denizot F."/>
            <person name="Devine K.M."/>
            <person name="Duesterhoeft A."/>
            <person name="Ehrlich S.D."/>
            <person name="Emmerson P.T."/>
            <person name="Entian K.-D."/>
            <person name="Errington J."/>
            <person name="Fabret C."/>
            <person name="Ferrari E."/>
            <person name="Foulger D."/>
            <person name="Fritz C."/>
            <person name="Fujita M."/>
            <person name="Fujita Y."/>
            <person name="Fuma S."/>
            <person name="Galizzi A."/>
            <person name="Galleron N."/>
            <person name="Ghim S.-Y."/>
            <person name="Glaser P."/>
            <person name="Goffeau A."/>
            <person name="Golightly E.J."/>
            <person name="Grandi G."/>
            <person name="Guiseppi G."/>
            <person name="Guy B.J."/>
            <person name="Haga K."/>
            <person name="Haiech J."/>
            <person name="Harwood C.R."/>
            <person name="Henaut A."/>
            <person name="Hilbert H."/>
            <person name="Holsappel S."/>
            <person name="Hosono S."/>
            <person name="Hullo M.-F."/>
            <person name="Itaya M."/>
            <person name="Jones L.-M."/>
            <person name="Joris B."/>
            <person name="Karamata D."/>
            <person name="Kasahara Y."/>
            <person name="Klaerr-Blanchard M."/>
            <person name="Klein C."/>
            <person name="Kobayashi Y."/>
            <person name="Koetter P."/>
            <person name="Koningstein G."/>
            <person name="Krogh S."/>
            <person name="Kumano M."/>
            <person name="Kurita K."/>
            <person name="Lapidus A."/>
            <person name="Lardinois S."/>
            <person name="Lauber J."/>
            <person name="Lazarevic V."/>
            <person name="Lee S.-M."/>
            <person name="Levine A."/>
            <person name="Liu H."/>
            <person name="Masuda S."/>
            <person name="Mauel C."/>
            <person name="Medigue C."/>
            <person name="Medina N."/>
            <person name="Mellado R.P."/>
            <person name="Mizuno M."/>
            <person name="Moestl D."/>
            <person name="Nakai S."/>
            <person name="Noback M."/>
            <person name="Noone D."/>
            <person name="O'Reilly M."/>
            <person name="Ogawa K."/>
            <person name="Ogiwara A."/>
            <person name="Oudega B."/>
            <person name="Park S.-H."/>
            <person name="Parro V."/>
            <person name="Pohl T.M."/>
            <person name="Portetelle D."/>
            <person name="Porwollik S."/>
            <person name="Prescott A.M."/>
            <person name="Presecan E."/>
            <person name="Pujic P."/>
            <person name="Purnelle B."/>
            <person name="Rapoport G."/>
            <person name="Rey M."/>
            <person name="Reynolds S."/>
            <person name="Rieger M."/>
            <person name="Rivolta C."/>
            <person name="Rocha E."/>
            <person name="Roche B."/>
            <person name="Rose M."/>
            <person name="Sadaie Y."/>
            <person name="Sato T."/>
            <person name="Scanlan E."/>
            <person name="Schleich S."/>
            <person name="Schroeter R."/>
            <person name="Scoffone F."/>
            <person name="Sekiguchi J."/>
            <person name="Sekowska A."/>
            <person name="Seror S.J."/>
            <person name="Serror P."/>
            <person name="Shin B.-S."/>
            <person name="Soldo B."/>
            <person name="Sorokin A."/>
            <person name="Tacconi E."/>
            <person name="Takagi T."/>
            <person name="Takahashi H."/>
            <person name="Takemaru K."/>
            <person name="Takeuchi M."/>
            <person name="Tamakoshi A."/>
            <person name="Tanaka T."/>
            <person name="Terpstra P."/>
            <person name="Tognoni A."/>
            <person name="Tosato V."/>
            <person name="Uchiyama S."/>
            <person name="Vandenbol M."/>
            <person name="Vannier F."/>
            <person name="Vassarotti A."/>
            <person name="Viari A."/>
            <person name="Wambutt R."/>
            <person name="Wedler E."/>
            <person name="Wedler H."/>
            <person name="Weitzenegger T."/>
            <person name="Winters P."/>
            <person name="Wipat A."/>
            <person name="Yamamoto H."/>
            <person name="Yamane K."/>
            <person name="Yasumoto K."/>
            <person name="Yata K."/>
            <person name="Yoshida K."/>
            <person name="Yoshikawa H.-F."/>
            <person name="Zumstein E."/>
            <person name="Yoshikawa H."/>
            <person name="Danchin A."/>
        </authorList>
    </citation>
    <scope>NUCLEOTIDE SEQUENCE [LARGE SCALE GENOMIC DNA]</scope>
    <source>
        <strain>168</strain>
    </source>
</reference>